<proteinExistence type="inferred from homology"/>
<organism>
    <name type="scientific">Desulfovibrio desulfuricans (strain ATCC 27774 / DSM 6949 / MB)</name>
    <dbReference type="NCBI Taxonomy" id="525146"/>
    <lineage>
        <taxon>Bacteria</taxon>
        <taxon>Pseudomonadati</taxon>
        <taxon>Thermodesulfobacteriota</taxon>
        <taxon>Desulfovibrionia</taxon>
        <taxon>Desulfovibrionales</taxon>
        <taxon>Desulfovibrionaceae</taxon>
        <taxon>Desulfovibrio</taxon>
    </lineage>
</organism>
<gene>
    <name evidence="1" type="primary">efp</name>
    <name type="ordered locus">Ddes_1204</name>
</gene>
<comment type="function">
    <text evidence="1">Involved in peptide bond synthesis. Stimulates efficient translation and peptide-bond synthesis on native or reconstituted 70S ribosomes in vitro. Probably functions indirectly by altering the affinity of the ribosome for aminoacyl-tRNA, thus increasing their reactivity as acceptors for peptidyl transferase.</text>
</comment>
<comment type="pathway">
    <text evidence="1">Protein biosynthesis; polypeptide chain elongation.</text>
</comment>
<comment type="subcellular location">
    <subcellularLocation>
        <location evidence="1">Cytoplasm</location>
    </subcellularLocation>
</comment>
<comment type="similarity">
    <text evidence="1">Belongs to the elongation factor P family.</text>
</comment>
<keyword id="KW-0963">Cytoplasm</keyword>
<keyword id="KW-0251">Elongation factor</keyword>
<keyword id="KW-0648">Protein biosynthesis</keyword>
<protein>
    <recommendedName>
        <fullName evidence="1">Elongation factor P</fullName>
        <shortName evidence="1">EF-P</shortName>
    </recommendedName>
</protein>
<name>EFP_DESDA</name>
<evidence type="ECO:0000255" key="1">
    <source>
        <dbReference type="HAMAP-Rule" id="MF_00141"/>
    </source>
</evidence>
<dbReference type="EMBL" id="CP001358">
    <property type="protein sequence ID" value="ACL49108.1"/>
    <property type="molecule type" value="Genomic_DNA"/>
</dbReference>
<dbReference type="SMR" id="B8J031"/>
<dbReference type="STRING" id="525146.Ddes_1204"/>
<dbReference type="KEGG" id="dds:Ddes_1204"/>
<dbReference type="eggNOG" id="COG0231">
    <property type="taxonomic scope" value="Bacteria"/>
</dbReference>
<dbReference type="HOGENOM" id="CLU_074944_0_1_7"/>
<dbReference type="UniPathway" id="UPA00345"/>
<dbReference type="GO" id="GO:0005737">
    <property type="term" value="C:cytoplasm"/>
    <property type="evidence" value="ECO:0007669"/>
    <property type="project" value="UniProtKB-SubCell"/>
</dbReference>
<dbReference type="GO" id="GO:0003746">
    <property type="term" value="F:translation elongation factor activity"/>
    <property type="evidence" value="ECO:0007669"/>
    <property type="project" value="UniProtKB-UniRule"/>
</dbReference>
<dbReference type="GO" id="GO:0043043">
    <property type="term" value="P:peptide biosynthetic process"/>
    <property type="evidence" value="ECO:0007669"/>
    <property type="project" value="InterPro"/>
</dbReference>
<dbReference type="CDD" id="cd04470">
    <property type="entry name" value="S1_EF-P_repeat_1"/>
    <property type="match status" value="1"/>
</dbReference>
<dbReference type="CDD" id="cd05794">
    <property type="entry name" value="S1_EF-P_repeat_2"/>
    <property type="match status" value="1"/>
</dbReference>
<dbReference type="FunFam" id="2.30.30.30:FF:000003">
    <property type="entry name" value="Elongation factor P"/>
    <property type="match status" value="1"/>
</dbReference>
<dbReference type="FunFam" id="2.40.50.140:FF:000004">
    <property type="entry name" value="Elongation factor P"/>
    <property type="match status" value="1"/>
</dbReference>
<dbReference type="FunFam" id="2.40.50.140:FF:000009">
    <property type="entry name" value="Elongation factor P"/>
    <property type="match status" value="1"/>
</dbReference>
<dbReference type="Gene3D" id="2.30.30.30">
    <property type="match status" value="1"/>
</dbReference>
<dbReference type="Gene3D" id="2.40.50.140">
    <property type="entry name" value="Nucleic acid-binding proteins"/>
    <property type="match status" value="2"/>
</dbReference>
<dbReference type="HAMAP" id="MF_00141">
    <property type="entry name" value="EF_P"/>
    <property type="match status" value="1"/>
</dbReference>
<dbReference type="InterPro" id="IPR015365">
    <property type="entry name" value="Elong-fact-P_C"/>
</dbReference>
<dbReference type="InterPro" id="IPR012340">
    <property type="entry name" value="NA-bd_OB-fold"/>
</dbReference>
<dbReference type="InterPro" id="IPR014722">
    <property type="entry name" value="Rib_uL2_dom2"/>
</dbReference>
<dbReference type="InterPro" id="IPR020599">
    <property type="entry name" value="Transl_elong_fac_P/YeiP"/>
</dbReference>
<dbReference type="InterPro" id="IPR013185">
    <property type="entry name" value="Transl_elong_KOW-like"/>
</dbReference>
<dbReference type="InterPro" id="IPR001059">
    <property type="entry name" value="Transl_elong_P/YeiP_cen"/>
</dbReference>
<dbReference type="InterPro" id="IPR013852">
    <property type="entry name" value="Transl_elong_P/YeiP_CS"/>
</dbReference>
<dbReference type="InterPro" id="IPR011768">
    <property type="entry name" value="Transl_elongation_fac_P"/>
</dbReference>
<dbReference type="InterPro" id="IPR008991">
    <property type="entry name" value="Translation_prot_SH3-like_sf"/>
</dbReference>
<dbReference type="NCBIfam" id="TIGR00038">
    <property type="entry name" value="efp"/>
    <property type="match status" value="1"/>
</dbReference>
<dbReference type="NCBIfam" id="NF001810">
    <property type="entry name" value="PRK00529.1"/>
    <property type="match status" value="1"/>
</dbReference>
<dbReference type="PANTHER" id="PTHR30053">
    <property type="entry name" value="ELONGATION FACTOR P"/>
    <property type="match status" value="1"/>
</dbReference>
<dbReference type="PANTHER" id="PTHR30053:SF12">
    <property type="entry name" value="ELONGATION FACTOR P (EF-P) FAMILY PROTEIN"/>
    <property type="match status" value="1"/>
</dbReference>
<dbReference type="Pfam" id="PF01132">
    <property type="entry name" value="EFP"/>
    <property type="match status" value="1"/>
</dbReference>
<dbReference type="Pfam" id="PF08207">
    <property type="entry name" value="EFP_N"/>
    <property type="match status" value="1"/>
</dbReference>
<dbReference type="Pfam" id="PF09285">
    <property type="entry name" value="Elong-fact-P_C"/>
    <property type="match status" value="1"/>
</dbReference>
<dbReference type="PIRSF" id="PIRSF005901">
    <property type="entry name" value="EF-P"/>
    <property type="match status" value="1"/>
</dbReference>
<dbReference type="SMART" id="SM01185">
    <property type="entry name" value="EFP"/>
    <property type="match status" value="1"/>
</dbReference>
<dbReference type="SMART" id="SM00841">
    <property type="entry name" value="Elong-fact-P_C"/>
    <property type="match status" value="1"/>
</dbReference>
<dbReference type="SUPFAM" id="SSF50249">
    <property type="entry name" value="Nucleic acid-binding proteins"/>
    <property type="match status" value="2"/>
</dbReference>
<dbReference type="SUPFAM" id="SSF50104">
    <property type="entry name" value="Translation proteins SH3-like domain"/>
    <property type="match status" value="1"/>
</dbReference>
<dbReference type="PROSITE" id="PS01275">
    <property type="entry name" value="EFP"/>
    <property type="match status" value="1"/>
</dbReference>
<reference key="1">
    <citation type="submission" date="2009-01" db="EMBL/GenBank/DDBJ databases">
        <title>Complete sequence of Desulfovibrio desulfuricans subsp. desulfuricans str. ATCC 27774.</title>
        <authorList>
            <consortium name="US DOE Joint Genome Institute"/>
            <person name="Lucas S."/>
            <person name="Copeland A."/>
            <person name="Lapidus A."/>
            <person name="Glavina del Rio T."/>
            <person name="Tice H."/>
            <person name="Bruce D."/>
            <person name="Goodwin L."/>
            <person name="Pitluck S."/>
            <person name="Sims D."/>
            <person name="Lu M."/>
            <person name="Kiss H."/>
            <person name="Meineke L."/>
            <person name="Brettin T."/>
            <person name="Detter J.C."/>
            <person name="Han C."/>
            <person name="Larimer F."/>
            <person name="Land M."/>
            <person name="Hauser L."/>
            <person name="Kyrpides N."/>
            <person name="Ovchinnikova G."/>
            <person name="Hazen T.C."/>
        </authorList>
    </citation>
    <scope>NUCLEOTIDE SEQUENCE [LARGE SCALE GENOMIC DNA]</scope>
    <source>
        <strain>ATCC 27774 / DSM 6949 / MB</strain>
    </source>
</reference>
<feature type="chain" id="PRO_1000123005" description="Elongation factor P">
    <location>
        <begin position="1"/>
        <end position="185"/>
    </location>
</feature>
<sequence>MYSTTDFRKGLKIEVEGIPYEIVDFQHFKPGKGGAMVRTKLRNILTGRMQDITFRSGEKVNKPDLETRDMQFLYRQDDDLIFMDMTTYEQLQMPVSTTDGKEGFLKDGQECRVLLYKGNPLDIDIPVSMVLAVVETEPGAKGDTVSNVTKPAKLETGLVVQVPIFVNEGDRIKVDTRSKEYLGRE</sequence>
<accession>B8J031</accession>